<dbReference type="EC" id="2.4.2.9" evidence="1"/>
<dbReference type="EMBL" id="CP001111">
    <property type="protein sequence ID" value="ACF51261.1"/>
    <property type="molecule type" value="Genomic_DNA"/>
</dbReference>
<dbReference type="RefSeq" id="WP_012510719.1">
    <property type="nucleotide sequence ID" value="NC_011071.1"/>
</dbReference>
<dbReference type="SMR" id="B4SS22"/>
<dbReference type="STRING" id="391008.Smal_1556"/>
<dbReference type="KEGG" id="smt:Smal_1556"/>
<dbReference type="eggNOG" id="COG0035">
    <property type="taxonomic scope" value="Bacteria"/>
</dbReference>
<dbReference type="HOGENOM" id="CLU_067096_2_2_6"/>
<dbReference type="OrthoDB" id="9781675at2"/>
<dbReference type="UniPathway" id="UPA00574">
    <property type="reaction ID" value="UER00636"/>
</dbReference>
<dbReference type="Proteomes" id="UP000001867">
    <property type="component" value="Chromosome"/>
</dbReference>
<dbReference type="GO" id="GO:0005525">
    <property type="term" value="F:GTP binding"/>
    <property type="evidence" value="ECO:0007669"/>
    <property type="project" value="UniProtKB-KW"/>
</dbReference>
<dbReference type="GO" id="GO:0000287">
    <property type="term" value="F:magnesium ion binding"/>
    <property type="evidence" value="ECO:0007669"/>
    <property type="project" value="UniProtKB-UniRule"/>
</dbReference>
<dbReference type="GO" id="GO:0004845">
    <property type="term" value="F:uracil phosphoribosyltransferase activity"/>
    <property type="evidence" value="ECO:0007669"/>
    <property type="project" value="UniProtKB-UniRule"/>
</dbReference>
<dbReference type="GO" id="GO:0044206">
    <property type="term" value="P:UMP salvage"/>
    <property type="evidence" value="ECO:0007669"/>
    <property type="project" value="UniProtKB-UniRule"/>
</dbReference>
<dbReference type="GO" id="GO:0006223">
    <property type="term" value="P:uracil salvage"/>
    <property type="evidence" value="ECO:0007669"/>
    <property type="project" value="InterPro"/>
</dbReference>
<dbReference type="CDD" id="cd06223">
    <property type="entry name" value="PRTases_typeI"/>
    <property type="match status" value="1"/>
</dbReference>
<dbReference type="FunFam" id="3.40.50.2020:FF:000003">
    <property type="entry name" value="Uracil phosphoribosyltransferase"/>
    <property type="match status" value="1"/>
</dbReference>
<dbReference type="Gene3D" id="3.40.50.2020">
    <property type="match status" value="1"/>
</dbReference>
<dbReference type="HAMAP" id="MF_01218_B">
    <property type="entry name" value="Upp_B"/>
    <property type="match status" value="1"/>
</dbReference>
<dbReference type="InterPro" id="IPR000836">
    <property type="entry name" value="PRibTrfase_dom"/>
</dbReference>
<dbReference type="InterPro" id="IPR029057">
    <property type="entry name" value="PRTase-like"/>
</dbReference>
<dbReference type="InterPro" id="IPR034332">
    <property type="entry name" value="Upp_B"/>
</dbReference>
<dbReference type="InterPro" id="IPR050054">
    <property type="entry name" value="UPRTase/APRTase"/>
</dbReference>
<dbReference type="InterPro" id="IPR005765">
    <property type="entry name" value="Ura_phspho_trans"/>
</dbReference>
<dbReference type="NCBIfam" id="NF001097">
    <property type="entry name" value="PRK00129.1"/>
    <property type="match status" value="1"/>
</dbReference>
<dbReference type="NCBIfam" id="TIGR01091">
    <property type="entry name" value="upp"/>
    <property type="match status" value="1"/>
</dbReference>
<dbReference type="PANTHER" id="PTHR32315">
    <property type="entry name" value="ADENINE PHOSPHORIBOSYLTRANSFERASE"/>
    <property type="match status" value="1"/>
</dbReference>
<dbReference type="PANTHER" id="PTHR32315:SF4">
    <property type="entry name" value="URACIL PHOSPHORIBOSYLTRANSFERASE, CHLOROPLASTIC"/>
    <property type="match status" value="1"/>
</dbReference>
<dbReference type="Pfam" id="PF14681">
    <property type="entry name" value="UPRTase"/>
    <property type="match status" value="1"/>
</dbReference>
<dbReference type="SUPFAM" id="SSF53271">
    <property type="entry name" value="PRTase-like"/>
    <property type="match status" value="1"/>
</dbReference>
<organism>
    <name type="scientific">Stenotrophomonas maltophilia (strain R551-3)</name>
    <dbReference type="NCBI Taxonomy" id="391008"/>
    <lineage>
        <taxon>Bacteria</taxon>
        <taxon>Pseudomonadati</taxon>
        <taxon>Pseudomonadota</taxon>
        <taxon>Gammaproteobacteria</taxon>
        <taxon>Lysobacterales</taxon>
        <taxon>Lysobacteraceae</taxon>
        <taxon>Stenotrophomonas</taxon>
        <taxon>Stenotrophomonas maltophilia group</taxon>
    </lineage>
</organism>
<protein>
    <recommendedName>
        <fullName evidence="1">Uracil phosphoribosyltransferase</fullName>
        <ecNumber evidence="1">2.4.2.9</ecNumber>
    </recommendedName>
    <alternativeName>
        <fullName evidence="1">UMP pyrophosphorylase</fullName>
    </alternativeName>
    <alternativeName>
        <fullName evidence="1">UPRTase</fullName>
    </alternativeName>
</protein>
<keyword id="KW-0021">Allosteric enzyme</keyword>
<keyword id="KW-0328">Glycosyltransferase</keyword>
<keyword id="KW-0342">GTP-binding</keyword>
<keyword id="KW-0460">Magnesium</keyword>
<keyword id="KW-0547">Nucleotide-binding</keyword>
<keyword id="KW-0808">Transferase</keyword>
<feature type="chain" id="PRO_1000139167" description="Uracil phosphoribosyltransferase">
    <location>
        <begin position="1"/>
        <end position="210"/>
    </location>
</feature>
<feature type="binding site" evidence="1">
    <location>
        <position position="78"/>
    </location>
    <ligand>
        <name>5-phospho-alpha-D-ribose 1-diphosphate</name>
        <dbReference type="ChEBI" id="CHEBI:58017"/>
    </ligand>
</feature>
<feature type="binding site" evidence="1">
    <location>
        <position position="103"/>
    </location>
    <ligand>
        <name>5-phospho-alpha-D-ribose 1-diphosphate</name>
        <dbReference type="ChEBI" id="CHEBI:58017"/>
    </ligand>
</feature>
<feature type="binding site" evidence="1">
    <location>
        <begin position="130"/>
        <end position="138"/>
    </location>
    <ligand>
        <name>5-phospho-alpha-D-ribose 1-diphosphate</name>
        <dbReference type="ChEBI" id="CHEBI:58017"/>
    </ligand>
</feature>
<feature type="binding site" evidence="1">
    <location>
        <position position="193"/>
    </location>
    <ligand>
        <name>uracil</name>
        <dbReference type="ChEBI" id="CHEBI:17568"/>
    </ligand>
</feature>
<feature type="binding site" evidence="1">
    <location>
        <begin position="198"/>
        <end position="200"/>
    </location>
    <ligand>
        <name>uracil</name>
        <dbReference type="ChEBI" id="CHEBI:17568"/>
    </ligand>
</feature>
<feature type="binding site" evidence="1">
    <location>
        <position position="199"/>
    </location>
    <ligand>
        <name>5-phospho-alpha-D-ribose 1-diphosphate</name>
        <dbReference type="ChEBI" id="CHEBI:58017"/>
    </ligand>
</feature>
<evidence type="ECO:0000255" key="1">
    <source>
        <dbReference type="HAMAP-Rule" id="MF_01218"/>
    </source>
</evidence>
<reference key="1">
    <citation type="submission" date="2008-06" db="EMBL/GenBank/DDBJ databases">
        <title>Complete sequence of Stenotrophomonas maltophilia R551-3.</title>
        <authorList>
            <consortium name="US DOE Joint Genome Institute"/>
            <person name="Lucas S."/>
            <person name="Copeland A."/>
            <person name="Lapidus A."/>
            <person name="Glavina del Rio T."/>
            <person name="Dalin E."/>
            <person name="Tice H."/>
            <person name="Pitluck S."/>
            <person name="Chain P."/>
            <person name="Malfatti S."/>
            <person name="Shin M."/>
            <person name="Vergez L."/>
            <person name="Lang D."/>
            <person name="Schmutz J."/>
            <person name="Larimer F."/>
            <person name="Land M."/>
            <person name="Hauser L."/>
            <person name="Kyrpides N."/>
            <person name="Mikhailova N."/>
            <person name="Taghavi S."/>
            <person name="Monchy S."/>
            <person name="Newman L."/>
            <person name="Vangronsveld J."/>
            <person name="van der Lelie D."/>
            <person name="Richardson P."/>
        </authorList>
    </citation>
    <scope>NUCLEOTIDE SEQUENCE [LARGE SCALE GENOMIC DNA]</scope>
    <source>
        <strain>R551-3</strain>
    </source>
</reference>
<name>UPP_STRM5</name>
<sequence length="210" mass="22544">MKIVEVRHPLVQHKIGLMRNAALSTKDFRELANELGTLLAYEATADLETEPHTLPGWAGPITVQRIAGAKITVVPILRAGLGMLSGVLSLIPAARVSVVGLQRDEETLQPVPYFERLTGRLEERDALILDPMLATGGTLIATIDMLKRAGARRIKGIFLVAAPEGIEAVKAVHPDVEIYTAAIDAQLNDKGYILPGLGDAGDRIFGTRVG</sequence>
<comment type="function">
    <text evidence="1">Catalyzes the conversion of uracil and 5-phospho-alpha-D-ribose 1-diphosphate (PRPP) to UMP and diphosphate.</text>
</comment>
<comment type="catalytic activity">
    <reaction evidence="1">
        <text>UMP + diphosphate = 5-phospho-alpha-D-ribose 1-diphosphate + uracil</text>
        <dbReference type="Rhea" id="RHEA:13017"/>
        <dbReference type="ChEBI" id="CHEBI:17568"/>
        <dbReference type="ChEBI" id="CHEBI:33019"/>
        <dbReference type="ChEBI" id="CHEBI:57865"/>
        <dbReference type="ChEBI" id="CHEBI:58017"/>
        <dbReference type="EC" id="2.4.2.9"/>
    </reaction>
</comment>
<comment type="cofactor">
    <cofactor evidence="1">
        <name>Mg(2+)</name>
        <dbReference type="ChEBI" id="CHEBI:18420"/>
    </cofactor>
    <text evidence="1">Binds 1 Mg(2+) ion per subunit. The magnesium is bound as Mg-PRPP.</text>
</comment>
<comment type="activity regulation">
    <text evidence="1">Allosterically activated by GTP.</text>
</comment>
<comment type="pathway">
    <text evidence="1">Pyrimidine metabolism; UMP biosynthesis via salvage pathway; UMP from uracil: step 1/1.</text>
</comment>
<comment type="similarity">
    <text evidence="1">Belongs to the UPRTase family.</text>
</comment>
<gene>
    <name evidence="1" type="primary">upp</name>
    <name type="ordered locus">Smal_1556</name>
</gene>
<proteinExistence type="inferred from homology"/>
<accession>B4SS22</accession>